<dbReference type="EMBL" id="CP000822">
    <property type="protein sequence ID" value="ABV15683.1"/>
    <property type="molecule type" value="Genomic_DNA"/>
</dbReference>
<dbReference type="RefSeq" id="WP_000829818.1">
    <property type="nucleotide sequence ID" value="NC_009792.1"/>
</dbReference>
<dbReference type="SMR" id="A8AQC0"/>
<dbReference type="STRING" id="290338.CKO_04633"/>
<dbReference type="GeneID" id="98390344"/>
<dbReference type="KEGG" id="cko:CKO_04633"/>
<dbReference type="HOGENOM" id="CLU_046483_2_1_6"/>
<dbReference type="OrthoDB" id="9803965at2"/>
<dbReference type="Proteomes" id="UP000008148">
    <property type="component" value="Chromosome"/>
</dbReference>
<dbReference type="GO" id="GO:0022627">
    <property type="term" value="C:cytosolic small ribosomal subunit"/>
    <property type="evidence" value="ECO:0007669"/>
    <property type="project" value="TreeGrafter"/>
</dbReference>
<dbReference type="GO" id="GO:0003723">
    <property type="term" value="F:RNA binding"/>
    <property type="evidence" value="ECO:0007669"/>
    <property type="project" value="TreeGrafter"/>
</dbReference>
<dbReference type="GO" id="GO:0003735">
    <property type="term" value="F:structural constituent of ribosome"/>
    <property type="evidence" value="ECO:0007669"/>
    <property type="project" value="InterPro"/>
</dbReference>
<dbReference type="GO" id="GO:0006412">
    <property type="term" value="P:translation"/>
    <property type="evidence" value="ECO:0007669"/>
    <property type="project" value="UniProtKB-UniRule"/>
</dbReference>
<dbReference type="FunFam" id="3.30.230.10:FF:000001">
    <property type="entry name" value="30S ribosomal protein S9"/>
    <property type="match status" value="1"/>
</dbReference>
<dbReference type="Gene3D" id="3.30.230.10">
    <property type="match status" value="1"/>
</dbReference>
<dbReference type="HAMAP" id="MF_00532_B">
    <property type="entry name" value="Ribosomal_uS9_B"/>
    <property type="match status" value="1"/>
</dbReference>
<dbReference type="InterPro" id="IPR020568">
    <property type="entry name" value="Ribosomal_Su5_D2-typ_SF"/>
</dbReference>
<dbReference type="InterPro" id="IPR000754">
    <property type="entry name" value="Ribosomal_uS9"/>
</dbReference>
<dbReference type="InterPro" id="IPR023035">
    <property type="entry name" value="Ribosomal_uS9_bac/plastid"/>
</dbReference>
<dbReference type="InterPro" id="IPR020574">
    <property type="entry name" value="Ribosomal_uS9_CS"/>
</dbReference>
<dbReference type="InterPro" id="IPR014721">
    <property type="entry name" value="Ribsml_uS5_D2-typ_fold_subgr"/>
</dbReference>
<dbReference type="NCBIfam" id="NF001099">
    <property type="entry name" value="PRK00132.1"/>
    <property type="match status" value="1"/>
</dbReference>
<dbReference type="PANTHER" id="PTHR21569">
    <property type="entry name" value="RIBOSOMAL PROTEIN S9"/>
    <property type="match status" value="1"/>
</dbReference>
<dbReference type="PANTHER" id="PTHR21569:SF1">
    <property type="entry name" value="SMALL RIBOSOMAL SUBUNIT PROTEIN US9M"/>
    <property type="match status" value="1"/>
</dbReference>
<dbReference type="Pfam" id="PF00380">
    <property type="entry name" value="Ribosomal_S9"/>
    <property type="match status" value="1"/>
</dbReference>
<dbReference type="SUPFAM" id="SSF54211">
    <property type="entry name" value="Ribosomal protein S5 domain 2-like"/>
    <property type="match status" value="1"/>
</dbReference>
<dbReference type="PROSITE" id="PS00360">
    <property type="entry name" value="RIBOSOMAL_S9"/>
    <property type="match status" value="1"/>
</dbReference>
<keyword id="KW-1185">Reference proteome</keyword>
<keyword id="KW-0687">Ribonucleoprotein</keyword>
<keyword id="KW-0689">Ribosomal protein</keyword>
<organism>
    <name type="scientific">Citrobacter koseri (strain ATCC BAA-895 / CDC 4225-83 / SGSC4696)</name>
    <dbReference type="NCBI Taxonomy" id="290338"/>
    <lineage>
        <taxon>Bacteria</taxon>
        <taxon>Pseudomonadati</taxon>
        <taxon>Pseudomonadota</taxon>
        <taxon>Gammaproteobacteria</taxon>
        <taxon>Enterobacterales</taxon>
        <taxon>Enterobacteriaceae</taxon>
        <taxon>Citrobacter</taxon>
    </lineage>
</organism>
<accession>A8AQC0</accession>
<evidence type="ECO:0000255" key="1">
    <source>
        <dbReference type="HAMAP-Rule" id="MF_00532"/>
    </source>
</evidence>
<evidence type="ECO:0000305" key="2"/>
<reference key="1">
    <citation type="submission" date="2007-08" db="EMBL/GenBank/DDBJ databases">
        <authorList>
            <consortium name="The Citrobacter koseri Genome Sequencing Project"/>
            <person name="McClelland M."/>
            <person name="Sanderson E.K."/>
            <person name="Porwollik S."/>
            <person name="Spieth J."/>
            <person name="Clifton W.S."/>
            <person name="Latreille P."/>
            <person name="Courtney L."/>
            <person name="Wang C."/>
            <person name="Pepin K."/>
            <person name="Bhonagiri V."/>
            <person name="Nash W."/>
            <person name="Johnson M."/>
            <person name="Thiruvilangam P."/>
            <person name="Wilson R."/>
        </authorList>
    </citation>
    <scope>NUCLEOTIDE SEQUENCE [LARGE SCALE GENOMIC DNA]</scope>
    <source>
        <strain>ATCC BAA-895 / CDC 4225-83 / SGSC4696</strain>
    </source>
</reference>
<name>RS9_CITK8</name>
<gene>
    <name evidence="1" type="primary">rpsI</name>
    <name type="ordered locus">CKO_04633</name>
</gene>
<comment type="similarity">
    <text evidence="1">Belongs to the universal ribosomal protein uS9 family.</text>
</comment>
<proteinExistence type="inferred from homology"/>
<feature type="chain" id="PRO_1000051202" description="Small ribosomal subunit protein uS9">
    <location>
        <begin position="1"/>
        <end position="130"/>
    </location>
</feature>
<protein>
    <recommendedName>
        <fullName evidence="1">Small ribosomal subunit protein uS9</fullName>
    </recommendedName>
    <alternativeName>
        <fullName evidence="2">30S ribosomal protein S9</fullName>
    </alternativeName>
</protein>
<sequence length="130" mass="14856">MAENQYYGTGRRKSSAARVFIKPGNGKIVINQRSLEQYFGRETARMVVRQPLELVDMVEKLDLYITVKGGGISGQAGAIRHGITRALMEYDESLRSELRKAGFVTRDARQVERKKVGLRKARRRPQFSKR</sequence>